<dbReference type="EC" id="2.4.2.1" evidence="2"/>
<dbReference type="EC" id="3.5.4.4" evidence="2"/>
<dbReference type="EC" id="2.4.2.28" evidence="2"/>
<dbReference type="EMBL" id="AE003849">
    <property type="protein sequence ID" value="AAF83750.1"/>
    <property type="molecule type" value="Genomic_DNA"/>
</dbReference>
<dbReference type="PIR" id="G82742">
    <property type="entry name" value="G82742"/>
</dbReference>
<dbReference type="SMR" id="Q9PET8"/>
<dbReference type="STRING" id="160492.XF_0940"/>
<dbReference type="KEGG" id="xfa:XF_0940"/>
<dbReference type="eggNOG" id="COG1496">
    <property type="taxonomic scope" value="Bacteria"/>
</dbReference>
<dbReference type="HOGENOM" id="CLU_065784_1_1_6"/>
<dbReference type="Proteomes" id="UP000000812">
    <property type="component" value="Chromosome"/>
</dbReference>
<dbReference type="GO" id="GO:0004000">
    <property type="term" value="F:adenosine deaminase activity"/>
    <property type="evidence" value="ECO:0007669"/>
    <property type="project" value="RHEA"/>
</dbReference>
<dbReference type="GO" id="GO:0005507">
    <property type="term" value="F:copper ion binding"/>
    <property type="evidence" value="ECO:0007669"/>
    <property type="project" value="TreeGrafter"/>
</dbReference>
<dbReference type="GO" id="GO:0016491">
    <property type="term" value="F:oxidoreductase activity"/>
    <property type="evidence" value="ECO:0007669"/>
    <property type="project" value="UniProtKB-KW"/>
</dbReference>
<dbReference type="GO" id="GO:0017061">
    <property type="term" value="F:S-methyl-5-thioadenosine phosphorylase activity"/>
    <property type="evidence" value="ECO:0007669"/>
    <property type="project" value="UniProtKB-EC"/>
</dbReference>
<dbReference type="CDD" id="cd16833">
    <property type="entry name" value="YfiH"/>
    <property type="match status" value="1"/>
</dbReference>
<dbReference type="Gene3D" id="3.60.140.10">
    <property type="entry name" value="CNF1/YfiH-like putative cysteine hydrolases"/>
    <property type="match status" value="1"/>
</dbReference>
<dbReference type="InterPro" id="IPR003730">
    <property type="entry name" value="Cu_polyphenol_OxRdtase"/>
</dbReference>
<dbReference type="InterPro" id="IPR038371">
    <property type="entry name" value="Cu_polyphenol_OxRdtase_sf"/>
</dbReference>
<dbReference type="InterPro" id="IPR011324">
    <property type="entry name" value="Cytotoxic_necrot_fac-like_cat"/>
</dbReference>
<dbReference type="NCBIfam" id="TIGR00726">
    <property type="entry name" value="peptidoglycan editing factor PgeF"/>
    <property type="match status" value="1"/>
</dbReference>
<dbReference type="PANTHER" id="PTHR30616:SF2">
    <property type="entry name" value="PURINE NUCLEOSIDE PHOSPHORYLASE LACC1"/>
    <property type="match status" value="1"/>
</dbReference>
<dbReference type="PANTHER" id="PTHR30616">
    <property type="entry name" value="UNCHARACTERIZED PROTEIN YFIH"/>
    <property type="match status" value="1"/>
</dbReference>
<dbReference type="Pfam" id="PF02578">
    <property type="entry name" value="Cu-oxidase_4"/>
    <property type="match status" value="1"/>
</dbReference>
<dbReference type="SUPFAM" id="SSF64438">
    <property type="entry name" value="CNF1/YfiH-like putative cysteine hydrolases"/>
    <property type="match status" value="1"/>
</dbReference>
<keyword id="KW-0186">Copper</keyword>
<keyword id="KW-0378">Hydrolase</keyword>
<keyword id="KW-0479">Metal-binding</keyword>
<keyword id="KW-0560">Oxidoreductase</keyword>
<keyword id="KW-0808">Transferase</keyword>
<keyword id="KW-0862">Zinc</keyword>
<proteinExistence type="inferred from homology"/>
<evidence type="ECO:0000250" key="1">
    <source>
        <dbReference type="UniProtKB" id="P33644"/>
    </source>
</evidence>
<evidence type="ECO:0000250" key="2">
    <source>
        <dbReference type="UniProtKB" id="P84138"/>
    </source>
</evidence>
<evidence type="ECO:0000250" key="3">
    <source>
        <dbReference type="UniProtKB" id="Q1EIR0"/>
    </source>
</evidence>
<evidence type="ECO:0000305" key="4"/>
<reference key="1">
    <citation type="journal article" date="2000" name="Nature">
        <title>The genome sequence of the plant pathogen Xylella fastidiosa.</title>
        <authorList>
            <person name="Simpson A.J.G."/>
            <person name="Reinach F.C."/>
            <person name="Arruda P."/>
            <person name="Abreu F.A."/>
            <person name="Acencio M."/>
            <person name="Alvarenga R."/>
            <person name="Alves L.M.C."/>
            <person name="Araya J.E."/>
            <person name="Baia G.S."/>
            <person name="Baptista C.S."/>
            <person name="Barros M.H."/>
            <person name="Bonaccorsi E.D."/>
            <person name="Bordin S."/>
            <person name="Bove J.M."/>
            <person name="Briones M.R.S."/>
            <person name="Bueno M.R.P."/>
            <person name="Camargo A.A."/>
            <person name="Camargo L.E.A."/>
            <person name="Carraro D.M."/>
            <person name="Carrer H."/>
            <person name="Colauto N.B."/>
            <person name="Colombo C."/>
            <person name="Costa F.F."/>
            <person name="Costa M.C.R."/>
            <person name="Costa-Neto C.M."/>
            <person name="Coutinho L.L."/>
            <person name="Cristofani M."/>
            <person name="Dias-Neto E."/>
            <person name="Docena C."/>
            <person name="El-Dorry H."/>
            <person name="Facincani A.P."/>
            <person name="Ferreira A.J.S."/>
            <person name="Ferreira V.C.A."/>
            <person name="Ferro J.A."/>
            <person name="Fraga J.S."/>
            <person name="Franca S.C."/>
            <person name="Franco M.C."/>
            <person name="Frohme M."/>
            <person name="Furlan L.R."/>
            <person name="Garnier M."/>
            <person name="Goldman G.H."/>
            <person name="Goldman M.H.S."/>
            <person name="Gomes S.L."/>
            <person name="Gruber A."/>
            <person name="Ho P.L."/>
            <person name="Hoheisel J.D."/>
            <person name="Junqueira M.L."/>
            <person name="Kemper E.L."/>
            <person name="Kitajima J.P."/>
            <person name="Krieger J.E."/>
            <person name="Kuramae E.E."/>
            <person name="Laigret F."/>
            <person name="Lambais M.R."/>
            <person name="Leite L.C.C."/>
            <person name="Lemos E.G.M."/>
            <person name="Lemos M.V.F."/>
            <person name="Lopes S.A."/>
            <person name="Lopes C.R."/>
            <person name="Machado J.A."/>
            <person name="Machado M.A."/>
            <person name="Madeira A.M.B.N."/>
            <person name="Madeira H.M.F."/>
            <person name="Marino C.L."/>
            <person name="Marques M.V."/>
            <person name="Martins E.A.L."/>
            <person name="Martins E.M.F."/>
            <person name="Matsukuma A.Y."/>
            <person name="Menck C.F.M."/>
            <person name="Miracca E.C."/>
            <person name="Miyaki C.Y."/>
            <person name="Monteiro-Vitorello C.B."/>
            <person name="Moon D.H."/>
            <person name="Nagai M.A."/>
            <person name="Nascimento A.L.T.O."/>
            <person name="Netto L.E.S."/>
            <person name="Nhani A. Jr."/>
            <person name="Nobrega F.G."/>
            <person name="Nunes L.R."/>
            <person name="Oliveira M.A."/>
            <person name="de Oliveira M.C."/>
            <person name="de Oliveira R.C."/>
            <person name="Palmieri D.A."/>
            <person name="Paris A."/>
            <person name="Peixoto B.R."/>
            <person name="Pereira G.A.G."/>
            <person name="Pereira H.A. Jr."/>
            <person name="Pesquero J.B."/>
            <person name="Quaggio R.B."/>
            <person name="Roberto P.G."/>
            <person name="Rodrigues V."/>
            <person name="de Rosa A.J.M."/>
            <person name="de Rosa V.E. Jr."/>
            <person name="de Sa R.G."/>
            <person name="Santelli R.V."/>
            <person name="Sawasaki H.E."/>
            <person name="da Silva A.C.R."/>
            <person name="da Silva A.M."/>
            <person name="da Silva F.R."/>
            <person name="Silva W.A. Jr."/>
            <person name="da Silveira J.F."/>
            <person name="Silvestri M.L.Z."/>
            <person name="Siqueira W.J."/>
            <person name="de Souza A.A."/>
            <person name="de Souza A.P."/>
            <person name="Terenzi M.F."/>
            <person name="Truffi D."/>
            <person name="Tsai S.M."/>
            <person name="Tsuhako M.H."/>
            <person name="Vallada H."/>
            <person name="Van Sluys M.A."/>
            <person name="Verjovski-Almeida S."/>
            <person name="Vettore A.L."/>
            <person name="Zago M.A."/>
            <person name="Zatz M."/>
            <person name="Meidanis J."/>
            <person name="Setubal J.C."/>
        </authorList>
    </citation>
    <scope>NUCLEOTIDE SEQUENCE [LARGE SCALE GENOMIC DNA]</scope>
    <source>
        <strain>9a5c</strain>
    </source>
</reference>
<name>PURNU_XYLFA</name>
<protein>
    <recommendedName>
        <fullName>Purine nucleoside phosphorylase XF_0940</fullName>
        <ecNumber evidence="2">2.4.2.1</ecNumber>
    </recommendedName>
    <alternativeName>
        <fullName>Adenosine deaminase XF_0940</fullName>
        <ecNumber evidence="2">3.5.4.4</ecNumber>
    </alternativeName>
    <alternativeName>
        <fullName>S-methyl-5'-thioadenosine phosphorylase XF_0940</fullName>
        <ecNumber evidence="2">2.4.2.28</ecNumber>
    </alternativeName>
</protein>
<organism>
    <name type="scientific">Xylella fastidiosa (strain 9a5c)</name>
    <dbReference type="NCBI Taxonomy" id="160492"/>
    <lineage>
        <taxon>Bacteria</taxon>
        <taxon>Pseudomonadati</taxon>
        <taxon>Pseudomonadota</taxon>
        <taxon>Gammaproteobacteria</taxon>
        <taxon>Lysobacterales</taxon>
        <taxon>Lysobacteraceae</taxon>
        <taxon>Xylella</taxon>
    </lineage>
</organism>
<comment type="function">
    <text evidence="2">Purine nucleoside enzyme that catalyzes the phosphorolysis of adenosine and inosine nucleosides, yielding D-ribose 1-phosphate and the respective free bases, adenine and hypoxanthine. Also catalyzes the phosphorolysis of S-methyl-5'-thioadenosine into adenine and S-methyl-5-thio-alpha-D-ribose 1-phosphate. Also has adenosine deaminase activity.</text>
</comment>
<comment type="catalytic activity">
    <reaction evidence="2">
        <text>adenosine + phosphate = alpha-D-ribose 1-phosphate + adenine</text>
        <dbReference type="Rhea" id="RHEA:27642"/>
        <dbReference type="ChEBI" id="CHEBI:16335"/>
        <dbReference type="ChEBI" id="CHEBI:16708"/>
        <dbReference type="ChEBI" id="CHEBI:43474"/>
        <dbReference type="ChEBI" id="CHEBI:57720"/>
        <dbReference type="EC" id="2.4.2.1"/>
    </reaction>
    <physiologicalReaction direction="left-to-right" evidence="2">
        <dbReference type="Rhea" id="RHEA:27643"/>
    </physiologicalReaction>
</comment>
<comment type="catalytic activity">
    <reaction evidence="2">
        <text>S-methyl-5'-thioadenosine + phosphate = 5-(methylsulfanyl)-alpha-D-ribose 1-phosphate + adenine</text>
        <dbReference type="Rhea" id="RHEA:11852"/>
        <dbReference type="ChEBI" id="CHEBI:16708"/>
        <dbReference type="ChEBI" id="CHEBI:17509"/>
        <dbReference type="ChEBI" id="CHEBI:43474"/>
        <dbReference type="ChEBI" id="CHEBI:58533"/>
        <dbReference type="EC" id="2.4.2.28"/>
    </reaction>
    <physiologicalReaction direction="left-to-right" evidence="2">
        <dbReference type="Rhea" id="RHEA:11853"/>
    </physiologicalReaction>
</comment>
<comment type="catalytic activity">
    <reaction evidence="2">
        <text>inosine + phosphate = alpha-D-ribose 1-phosphate + hypoxanthine</text>
        <dbReference type="Rhea" id="RHEA:27646"/>
        <dbReference type="ChEBI" id="CHEBI:17368"/>
        <dbReference type="ChEBI" id="CHEBI:17596"/>
        <dbReference type="ChEBI" id="CHEBI:43474"/>
        <dbReference type="ChEBI" id="CHEBI:57720"/>
        <dbReference type="EC" id="2.4.2.1"/>
    </reaction>
    <physiologicalReaction direction="left-to-right" evidence="2">
        <dbReference type="Rhea" id="RHEA:27647"/>
    </physiologicalReaction>
</comment>
<comment type="catalytic activity">
    <reaction evidence="2">
        <text>adenosine + H2O + H(+) = inosine + NH4(+)</text>
        <dbReference type="Rhea" id="RHEA:24408"/>
        <dbReference type="ChEBI" id="CHEBI:15377"/>
        <dbReference type="ChEBI" id="CHEBI:15378"/>
        <dbReference type="ChEBI" id="CHEBI:16335"/>
        <dbReference type="ChEBI" id="CHEBI:17596"/>
        <dbReference type="ChEBI" id="CHEBI:28938"/>
        <dbReference type="EC" id="3.5.4.4"/>
    </reaction>
    <physiologicalReaction direction="left-to-right" evidence="2">
        <dbReference type="Rhea" id="RHEA:24409"/>
    </physiologicalReaction>
</comment>
<comment type="cofactor">
    <cofactor evidence="1">
        <name>Cu(2+)</name>
        <dbReference type="ChEBI" id="CHEBI:29036"/>
    </cofactor>
    <cofactor evidence="2">
        <name>Zn(2+)</name>
        <dbReference type="ChEBI" id="CHEBI:29105"/>
    </cofactor>
</comment>
<comment type="subunit">
    <text evidence="3">Homodimer.</text>
</comment>
<comment type="similarity">
    <text evidence="4">Belongs to the purine nucleoside phosphorylase YfiH/LACC1 family.</text>
</comment>
<accession>Q9PET8</accession>
<gene>
    <name type="ordered locus">XF_0940</name>
</gene>
<sequence length="260" mass="27613">MGRFPSWVLVADWPAPPGVMVLSTLRGGPGVSVAPFDRLNLGNCSGVAGDAPVCVERNRSRLVEMLGLPSVPHWLRQVHGVEVLRVDALLQSIARVVEPTADAAVTSVVGAVLAILTADCLPVVLAAVDGSEIGVVHAGWRGLADDVLGRTVAALRTSPEYLQAWLGPAAGPQAYEVGVDVYAAFVERDSGAACAFSVTRPGHWYVDLYALARQRLMRAGLSAVSIYGGGLCTISDPQRFFSHRRDRRSGRFATLAWIGC</sequence>
<feature type="chain" id="PRO_0000163185" description="Purine nucleoside phosphorylase XF_0940">
    <location>
        <begin position="1"/>
        <end position="260"/>
    </location>
</feature>
<feature type="binding site" evidence="2">
    <location>
        <position position="79"/>
    </location>
    <ligand>
        <name>Zn(2+)</name>
        <dbReference type="ChEBI" id="CHEBI:29105"/>
        <note>catalytic</note>
    </ligand>
</feature>
<feature type="binding site" evidence="2">
    <location>
        <position position="120"/>
    </location>
    <ligand>
        <name>Zn(2+)</name>
        <dbReference type="ChEBI" id="CHEBI:29105"/>
        <note>catalytic</note>
    </ligand>
</feature>
<feature type="binding site" evidence="2">
    <location>
        <position position="137"/>
    </location>
    <ligand>
        <name>Zn(2+)</name>
        <dbReference type="ChEBI" id="CHEBI:29105"/>
        <note>catalytic</note>
    </ligand>
</feature>